<reference key="1">
    <citation type="journal article" date="2009" name="PLoS Genet.">
        <title>Organised genome dynamics in the Escherichia coli species results in highly diverse adaptive paths.</title>
        <authorList>
            <person name="Touchon M."/>
            <person name="Hoede C."/>
            <person name="Tenaillon O."/>
            <person name="Barbe V."/>
            <person name="Baeriswyl S."/>
            <person name="Bidet P."/>
            <person name="Bingen E."/>
            <person name="Bonacorsi S."/>
            <person name="Bouchier C."/>
            <person name="Bouvet O."/>
            <person name="Calteau A."/>
            <person name="Chiapello H."/>
            <person name="Clermont O."/>
            <person name="Cruveiller S."/>
            <person name="Danchin A."/>
            <person name="Diard M."/>
            <person name="Dossat C."/>
            <person name="Karoui M.E."/>
            <person name="Frapy E."/>
            <person name="Garry L."/>
            <person name="Ghigo J.M."/>
            <person name="Gilles A.M."/>
            <person name="Johnson J."/>
            <person name="Le Bouguenec C."/>
            <person name="Lescat M."/>
            <person name="Mangenot S."/>
            <person name="Martinez-Jehanne V."/>
            <person name="Matic I."/>
            <person name="Nassif X."/>
            <person name="Oztas S."/>
            <person name="Petit M.A."/>
            <person name="Pichon C."/>
            <person name="Rouy Z."/>
            <person name="Ruf C.S."/>
            <person name="Schneider D."/>
            <person name="Tourret J."/>
            <person name="Vacherie B."/>
            <person name="Vallenet D."/>
            <person name="Medigue C."/>
            <person name="Rocha E.P.C."/>
            <person name="Denamur E."/>
        </authorList>
    </citation>
    <scope>NUCLEOTIDE SEQUENCE [LARGE SCALE GENOMIC DNA]</scope>
    <source>
        <strain>ED1a</strain>
    </source>
</reference>
<protein>
    <recommendedName>
        <fullName evidence="1">UvrABC system protein C</fullName>
        <shortName evidence="1">Protein UvrC</shortName>
    </recommendedName>
    <alternativeName>
        <fullName evidence="1">Excinuclease ABC subunit C</fullName>
    </alternativeName>
</protein>
<keyword id="KW-0963">Cytoplasm</keyword>
<keyword id="KW-0227">DNA damage</keyword>
<keyword id="KW-0228">DNA excision</keyword>
<keyword id="KW-0234">DNA repair</keyword>
<keyword id="KW-0267">Excision nuclease</keyword>
<keyword id="KW-0742">SOS response</keyword>
<accession>B7MWA0</accession>
<sequence>MSDQFDAKAFLKTVTSQPGVYRMYDAGGTVIYVGKAKDLKKRLSSYFRSNLASRKTEALVAQIQQIDVTVTHTETEALLLEHNYIKLYQPRYNVLLRDDKSYPFIFLSGDTHPRLAMHRGAKHAKGEYFGPFPNGYAVRETLALLQKIFPIRQCENSVYRNRSRPCLQYQIGRCLGPCVEGLVSEEEYAQQVEYVRLFLSGKDDQVLTQLISRMETASQNLEFEEAARIRDQIQAVRRVTEKQFVSNTGDDLDVIGVAFDAGMACVHVLFIRQGKVLGSRSYFPKVPGGTELSEVVETFVGQFYLQGSQMRTLPGEILLDFNLSDKTLLADSLSELAGRKINVQTKPRGDRARYLKLARTNAATALTSKLSQQSTVHQRLTALASVLKLPEVKRMECFDISHTMGEQTVASCVVFDANGPLRAEYRRYNITGITPGDDYAAMNQVLRRRYGKAIDDSKIPDVILIDGGKGQLAQAKNVFAELDVSWDKNHPLLLGVAKGADRKAGLETLFFEPEGEGFSLPPDSPALHVIQHIRDESHDHAIGGHRKKRAKVKNTSSLETIEGVGPKRRQMLLKYMGGLQGLRNASVEEIAKVPGISQGLAEKIFWSLKH</sequence>
<feature type="chain" id="PRO_1000200588" description="UvrABC system protein C">
    <location>
        <begin position="1"/>
        <end position="610"/>
    </location>
</feature>
<feature type="domain" description="GIY-YIG" evidence="1">
    <location>
        <begin position="16"/>
        <end position="94"/>
    </location>
</feature>
<feature type="domain" description="UVR" evidence="1">
    <location>
        <begin position="204"/>
        <end position="239"/>
    </location>
</feature>
<comment type="function">
    <text evidence="1">The UvrABC repair system catalyzes the recognition and processing of DNA lesions. UvrC both incises the 5' and 3' sides of the lesion. The N-terminal half is responsible for the 3' incision and the C-terminal half is responsible for the 5' incision.</text>
</comment>
<comment type="subunit">
    <text evidence="1">Interacts with UvrB in an incision complex.</text>
</comment>
<comment type="subcellular location">
    <subcellularLocation>
        <location evidence="1">Cytoplasm</location>
    </subcellularLocation>
</comment>
<comment type="similarity">
    <text evidence="1">Belongs to the UvrC family.</text>
</comment>
<name>UVRC_ECO81</name>
<dbReference type="EMBL" id="CU928162">
    <property type="protein sequence ID" value="CAR08366.2"/>
    <property type="molecule type" value="Genomic_DNA"/>
</dbReference>
<dbReference type="RefSeq" id="WP_001283421.1">
    <property type="nucleotide sequence ID" value="NC_011745.1"/>
</dbReference>
<dbReference type="SMR" id="B7MWA0"/>
<dbReference type="GeneID" id="93776218"/>
<dbReference type="KEGG" id="ecq:ECED1_2178"/>
<dbReference type="HOGENOM" id="CLU_014841_3_0_6"/>
<dbReference type="Proteomes" id="UP000000748">
    <property type="component" value="Chromosome"/>
</dbReference>
<dbReference type="GO" id="GO:0005737">
    <property type="term" value="C:cytoplasm"/>
    <property type="evidence" value="ECO:0007669"/>
    <property type="project" value="UniProtKB-SubCell"/>
</dbReference>
<dbReference type="GO" id="GO:0009380">
    <property type="term" value="C:excinuclease repair complex"/>
    <property type="evidence" value="ECO:0007669"/>
    <property type="project" value="InterPro"/>
</dbReference>
<dbReference type="GO" id="GO:0003677">
    <property type="term" value="F:DNA binding"/>
    <property type="evidence" value="ECO:0007669"/>
    <property type="project" value="UniProtKB-UniRule"/>
</dbReference>
<dbReference type="GO" id="GO:0009381">
    <property type="term" value="F:excinuclease ABC activity"/>
    <property type="evidence" value="ECO:0007669"/>
    <property type="project" value="UniProtKB-UniRule"/>
</dbReference>
<dbReference type="GO" id="GO:0006289">
    <property type="term" value="P:nucleotide-excision repair"/>
    <property type="evidence" value="ECO:0007669"/>
    <property type="project" value="UniProtKB-UniRule"/>
</dbReference>
<dbReference type="GO" id="GO:0009432">
    <property type="term" value="P:SOS response"/>
    <property type="evidence" value="ECO:0007669"/>
    <property type="project" value="UniProtKB-UniRule"/>
</dbReference>
<dbReference type="CDD" id="cd10434">
    <property type="entry name" value="GIY-YIG_UvrC_Cho"/>
    <property type="match status" value="1"/>
</dbReference>
<dbReference type="FunFam" id="1.10.150.20:FF:000005">
    <property type="entry name" value="UvrABC system protein C"/>
    <property type="match status" value="1"/>
</dbReference>
<dbReference type="FunFam" id="3.30.420.340:FF:000001">
    <property type="entry name" value="UvrABC system protein C"/>
    <property type="match status" value="1"/>
</dbReference>
<dbReference type="FunFam" id="3.40.1440.10:FF:000001">
    <property type="entry name" value="UvrABC system protein C"/>
    <property type="match status" value="1"/>
</dbReference>
<dbReference type="FunFam" id="4.10.860.10:FF:000002">
    <property type="entry name" value="UvrABC system protein C"/>
    <property type="match status" value="1"/>
</dbReference>
<dbReference type="Gene3D" id="1.10.150.20">
    <property type="entry name" value="5' to 3' exonuclease, C-terminal subdomain"/>
    <property type="match status" value="1"/>
</dbReference>
<dbReference type="Gene3D" id="3.40.1440.10">
    <property type="entry name" value="GIY-YIG endonuclease"/>
    <property type="match status" value="1"/>
</dbReference>
<dbReference type="Gene3D" id="4.10.860.10">
    <property type="entry name" value="UVR domain"/>
    <property type="match status" value="1"/>
</dbReference>
<dbReference type="Gene3D" id="3.30.420.340">
    <property type="entry name" value="UvrC, RNAse H endonuclease domain"/>
    <property type="match status" value="1"/>
</dbReference>
<dbReference type="HAMAP" id="MF_00203">
    <property type="entry name" value="UvrC"/>
    <property type="match status" value="1"/>
</dbReference>
<dbReference type="InterPro" id="IPR000305">
    <property type="entry name" value="GIY-YIG_endonuc"/>
</dbReference>
<dbReference type="InterPro" id="IPR035901">
    <property type="entry name" value="GIY-YIG_endonuc_sf"/>
</dbReference>
<dbReference type="InterPro" id="IPR047296">
    <property type="entry name" value="GIY-YIG_UvrC_Cho"/>
</dbReference>
<dbReference type="InterPro" id="IPR003583">
    <property type="entry name" value="Hlx-hairpin-Hlx_DNA-bd_motif"/>
</dbReference>
<dbReference type="InterPro" id="IPR010994">
    <property type="entry name" value="RuvA_2-like"/>
</dbReference>
<dbReference type="InterPro" id="IPR001943">
    <property type="entry name" value="UVR_dom"/>
</dbReference>
<dbReference type="InterPro" id="IPR036876">
    <property type="entry name" value="UVR_dom_sf"/>
</dbReference>
<dbReference type="InterPro" id="IPR050066">
    <property type="entry name" value="UvrABC_protein_C"/>
</dbReference>
<dbReference type="InterPro" id="IPR004791">
    <property type="entry name" value="UvrC"/>
</dbReference>
<dbReference type="InterPro" id="IPR001162">
    <property type="entry name" value="UvrC_RNase_H_dom"/>
</dbReference>
<dbReference type="InterPro" id="IPR038476">
    <property type="entry name" value="UvrC_RNase_H_dom_sf"/>
</dbReference>
<dbReference type="NCBIfam" id="NF001824">
    <property type="entry name" value="PRK00558.1-5"/>
    <property type="match status" value="1"/>
</dbReference>
<dbReference type="NCBIfam" id="TIGR00194">
    <property type="entry name" value="uvrC"/>
    <property type="match status" value="1"/>
</dbReference>
<dbReference type="PANTHER" id="PTHR30562:SF1">
    <property type="entry name" value="UVRABC SYSTEM PROTEIN C"/>
    <property type="match status" value="1"/>
</dbReference>
<dbReference type="PANTHER" id="PTHR30562">
    <property type="entry name" value="UVRC/OXIDOREDUCTASE"/>
    <property type="match status" value="1"/>
</dbReference>
<dbReference type="Pfam" id="PF01541">
    <property type="entry name" value="GIY-YIG"/>
    <property type="match status" value="1"/>
</dbReference>
<dbReference type="Pfam" id="PF14520">
    <property type="entry name" value="HHH_5"/>
    <property type="match status" value="1"/>
</dbReference>
<dbReference type="Pfam" id="PF02151">
    <property type="entry name" value="UVR"/>
    <property type="match status" value="1"/>
</dbReference>
<dbReference type="Pfam" id="PF22920">
    <property type="entry name" value="UvrC_RNaseH"/>
    <property type="match status" value="1"/>
</dbReference>
<dbReference type="Pfam" id="PF08459">
    <property type="entry name" value="UvrC_RNaseH_dom"/>
    <property type="match status" value="1"/>
</dbReference>
<dbReference type="SMART" id="SM00465">
    <property type="entry name" value="GIYc"/>
    <property type="match status" value="1"/>
</dbReference>
<dbReference type="SMART" id="SM00278">
    <property type="entry name" value="HhH1"/>
    <property type="match status" value="2"/>
</dbReference>
<dbReference type="SUPFAM" id="SSF46600">
    <property type="entry name" value="C-terminal UvrC-binding domain of UvrB"/>
    <property type="match status" value="1"/>
</dbReference>
<dbReference type="SUPFAM" id="SSF82771">
    <property type="entry name" value="GIY-YIG endonuclease"/>
    <property type="match status" value="1"/>
</dbReference>
<dbReference type="SUPFAM" id="SSF47781">
    <property type="entry name" value="RuvA domain 2-like"/>
    <property type="match status" value="1"/>
</dbReference>
<dbReference type="PROSITE" id="PS50164">
    <property type="entry name" value="GIY_YIG"/>
    <property type="match status" value="1"/>
</dbReference>
<dbReference type="PROSITE" id="PS50151">
    <property type="entry name" value="UVR"/>
    <property type="match status" value="1"/>
</dbReference>
<dbReference type="PROSITE" id="PS50165">
    <property type="entry name" value="UVRC"/>
    <property type="match status" value="1"/>
</dbReference>
<evidence type="ECO:0000255" key="1">
    <source>
        <dbReference type="HAMAP-Rule" id="MF_00203"/>
    </source>
</evidence>
<proteinExistence type="inferred from homology"/>
<organism>
    <name type="scientific">Escherichia coli O81 (strain ED1a)</name>
    <dbReference type="NCBI Taxonomy" id="585397"/>
    <lineage>
        <taxon>Bacteria</taxon>
        <taxon>Pseudomonadati</taxon>
        <taxon>Pseudomonadota</taxon>
        <taxon>Gammaproteobacteria</taxon>
        <taxon>Enterobacterales</taxon>
        <taxon>Enterobacteriaceae</taxon>
        <taxon>Escherichia</taxon>
    </lineage>
</organism>
<gene>
    <name evidence="1" type="primary">uvrC</name>
    <name type="ordered locus">ECED1_2178</name>
</gene>